<proteinExistence type="inferred from homology"/>
<protein>
    <recommendedName>
        <fullName evidence="1">Argininosuccinate lyase</fullName>
        <shortName evidence="1">ASAL</shortName>
        <ecNumber evidence="1">4.3.2.1</ecNumber>
    </recommendedName>
    <alternativeName>
        <fullName evidence="1">Arginosuccinase</fullName>
    </alternativeName>
</protein>
<keyword id="KW-0028">Amino-acid biosynthesis</keyword>
<keyword id="KW-0055">Arginine biosynthesis</keyword>
<keyword id="KW-0963">Cytoplasm</keyword>
<keyword id="KW-0456">Lyase</keyword>
<keyword id="KW-1185">Reference proteome</keyword>
<reference key="1">
    <citation type="journal article" date="2009" name="J. Bacteriol.">
        <title>Complete genome sequence and comparative genome analysis of enteropathogenic Escherichia coli O127:H6 strain E2348/69.</title>
        <authorList>
            <person name="Iguchi A."/>
            <person name="Thomson N.R."/>
            <person name="Ogura Y."/>
            <person name="Saunders D."/>
            <person name="Ooka T."/>
            <person name="Henderson I.R."/>
            <person name="Harris D."/>
            <person name="Asadulghani M."/>
            <person name="Kurokawa K."/>
            <person name="Dean P."/>
            <person name="Kenny B."/>
            <person name="Quail M.A."/>
            <person name="Thurston S."/>
            <person name="Dougan G."/>
            <person name="Hayashi T."/>
            <person name="Parkhill J."/>
            <person name="Frankel G."/>
        </authorList>
    </citation>
    <scope>NUCLEOTIDE SEQUENCE [LARGE SCALE GENOMIC DNA]</scope>
    <source>
        <strain>E2348/69 / EPEC</strain>
    </source>
</reference>
<sequence length="457" mass="50245">MALWGGRFTQAADQRFKQFNDSLRFDYRLAEQDIVGSVAWSKALVTVGVLTAEEQAQLEEALNVLLEDVRARPQQILESDAEDIHSWVEGKLIDKVGQLGKKLHTGRSRNDQVATDLKLWCKDTVSELLTANRQLQSALVETAQNNQDAVMPGYTHLQRAQPVTFAHWCLAYVEMLARDESRLQDALKRLDVSPLGCGALAGTAYEIDREQLAGWLGFASATRNSLDSVSDRDHVLELLSAAAIGMVHLSRFAEDLIFFNTGEAGFVELSDRVTSGSSLMPQKKNPDALELIRGKCGRVQGALTGMMMTLKGLPLAYNKDMQEDKEGLFDALDTWLDCLHMAALVLDGIQVKRPRCQEAAQQGYANATELADYLVAKGVPFREAHHIVGEAVVEAIRQGKPLEDLPLSELQKFSLVIGEDVYPILSLQSCLDKRAAKGGVSPQQVAQAIAFAQARLG</sequence>
<organism>
    <name type="scientific">Escherichia coli O127:H6 (strain E2348/69 / EPEC)</name>
    <dbReference type="NCBI Taxonomy" id="574521"/>
    <lineage>
        <taxon>Bacteria</taxon>
        <taxon>Pseudomonadati</taxon>
        <taxon>Pseudomonadota</taxon>
        <taxon>Gammaproteobacteria</taxon>
        <taxon>Enterobacterales</taxon>
        <taxon>Enterobacteriaceae</taxon>
        <taxon>Escherichia</taxon>
    </lineage>
</organism>
<accession>B7UNT6</accession>
<gene>
    <name evidence="1" type="primary">argH</name>
    <name type="ordered locus">E2348C_4272</name>
</gene>
<comment type="catalytic activity">
    <reaction evidence="1">
        <text>2-(N(omega)-L-arginino)succinate = fumarate + L-arginine</text>
        <dbReference type="Rhea" id="RHEA:24020"/>
        <dbReference type="ChEBI" id="CHEBI:29806"/>
        <dbReference type="ChEBI" id="CHEBI:32682"/>
        <dbReference type="ChEBI" id="CHEBI:57472"/>
        <dbReference type="EC" id="4.3.2.1"/>
    </reaction>
</comment>
<comment type="pathway">
    <text evidence="1">Amino-acid biosynthesis; L-arginine biosynthesis; L-arginine from L-ornithine and carbamoyl phosphate: step 3/3.</text>
</comment>
<comment type="subcellular location">
    <subcellularLocation>
        <location evidence="1">Cytoplasm</location>
    </subcellularLocation>
</comment>
<comment type="similarity">
    <text evidence="1">Belongs to the lyase 1 family. Argininosuccinate lyase subfamily.</text>
</comment>
<name>ARLY_ECO27</name>
<evidence type="ECO:0000255" key="1">
    <source>
        <dbReference type="HAMAP-Rule" id="MF_00006"/>
    </source>
</evidence>
<dbReference type="EC" id="4.3.2.1" evidence="1"/>
<dbReference type="EMBL" id="FM180568">
    <property type="protein sequence ID" value="CAS11820.1"/>
    <property type="molecule type" value="Genomic_DNA"/>
</dbReference>
<dbReference type="RefSeq" id="WP_001230086.1">
    <property type="nucleotide sequence ID" value="NC_011601.1"/>
</dbReference>
<dbReference type="SMR" id="B7UNT6"/>
<dbReference type="KEGG" id="ecg:E2348C_4272"/>
<dbReference type="HOGENOM" id="CLU_027272_2_3_6"/>
<dbReference type="UniPathway" id="UPA00068">
    <property type="reaction ID" value="UER00114"/>
</dbReference>
<dbReference type="Proteomes" id="UP000008205">
    <property type="component" value="Chromosome"/>
</dbReference>
<dbReference type="GO" id="GO:0005829">
    <property type="term" value="C:cytosol"/>
    <property type="evidence" value="ECO:0007669"/>
    <property type="project" value="TreeGrafter"/>
</dbReference>
<dbReference type="GO" id="GO:0004056">
    <property type="term" value="F:argininosuccinate lyase activity"/>
    <property type="evidence" value="ECO:0007669"/>
    <property type="project" value="UniProtKB-UniRule"/>
</dbReference>
<dbReference type="GO" id="GO:0042450">
    <property type="term" value="P:arginine biosynthetic process via ornithine"/>
    <property type="evidence" value="ECO:0007669"/>
    <property type="project" value="InterPro"/>
</dbReference>
<dbReference type="GO" id="GO:0006526">
    <property type="term" value="P:L-arginine biosynthetic process"/>
    <property type="evidence" value="ECO:0007669"/>
    <property type="project" value="UniProtKB-UniRule"/>
</dbReference>
<dbReference type="CDD" id="cd01359">
    <property type="entry name" value="Argininosuccinate_lyase"/>
    <property type="match status" value="1"/>
</dbReference>
<dbReference type="FunFam" id="1.10.275.10:FF:000004">
    <property type="entry name" value="Argininosuccinate lyase"/>
    <property type="match status" value="1"/>
</dbReference>
<dbReference type="FunFam" id="1.10.40.30:FF:000001">
    <property type="entry name" value="Argininosuccinate lyase"/>
    <property type="match status" value="1"/>
</dbReference>
<dbReference type="FunFam" id="1.20.200.10:FF:000006">
    <property type="entry name" value="Argininosuccinate lyase"/>
    <property type="match status" value="1"/>
</dbReference>
<dbReference type="Gene3D" id="1.10.40.30">
    <property type="entry name" value="Fumarase/aspartase (C-terminal domain)"/>
    <property type="match status" value="1"/>
</dbReference>
<dbReference type="Gene3D" id="1.20.200.10">
    <property type="entry name" value="Fumarase/aspartase (Central domain)"/>
    <property type="match status" value="1"/>
</dbReference>
<dbReference type="Gene3D" id="1.10.275.10">
    <property type="entry name" value="Fumarase/aspartase (N-terminal domain)"/>
    <property type="match status" value="1"/>
</dbReference>
<dbReference type="HAMAP" id="MF_00006">
    <property type="entry name" value="Arg_succ_lyase"/>
    <property type="match status" value="1"/>
</dbReference>
<dbReference type="InterPro" id="IPR029419">
    <property type="entry name" value="Arg_succ_lyase_C"/>
</dbReference>
<dbReference type="InterPro" id="IPR009049">
    <property type="entry name" value="Argininosuccinate_lyase"/>
</dbReference>
<dbReference type="InterPro" id="IPR024083">
    <property type="entry name" value="Fumarase/histidase_N"/>
</dbReference>
<dbReference type="InterPro" id="IPR020557">
    <property type="entry name" value="Fumarate_lyase_CS"/>
</dbReference>
<dbReference type="InterPro" id="IPR000362">
    <property type="entry name" value="Fumarate_lyase_fam"/>
</dbReference>
<dbReference type="InterPro" id="IPR022761">
    <property type="entry name" value="Fumarate_lyase_N"/>
</dbReference>
<dbReference type="InterPro" id="IPR008948">
    <property type="entry name" value="L-Aspartase-like"/>
</dbReference>
<dbReference type="NCBIfam" id="TIGR00838">
    <property type="entry name" value="argH"/>
    <property type="match status" value="1"/>
</dbReference>
<dbReference type="NCBIfam" id="NF008964">
    <property type="entry name" value="PRK12308.1"/>
    <property type="match status" value="1"/>
</dbReference>
<dbReference type="PANTHER" id="PTHR43814">
    <property type="entry name" value="ARGININOSUCCINATE LYASE"/>
    <property type="match status" value="1"/>
</dbReference>
<dbReference type="PANTHER" id="PTHR43814:SF1">
    <property type="entry name" value="ARGININOSUCCINATE LYASE"/>
    <property type="match status" value="1"/>
</dbReference>
<dbReference type="Pfam" id="PF14698">
    <property type="entry name" value="ASL_C2"/>
    <property type="match status" value="1"/>
</dbReference>
<dbReference type="Pfam" id="PF00206">
    <property type="entry name" value="Lyase_1"/>
    <property type="match status" value="1"/>
</dbReference>
<dbReference type="PRINTS" id="PR00145">
    <property type="entry name" value="ARGSUCLYASE"/>
</dbReference>
<dbReference type="PRINTS" id="PR00149">
    <property type="entry name" value="FUMRATELYASE"/>
</dbReference>
<dbReference type="SUPFAM" id="SSF48557">
    <property type="entry name" value="L-aspartase-like"/>
    <property type="match status" value="1"/>
</dbReference>
<dbReference type="PROSITE" id="PS00163">
    <property type="entry name" value="FUMARATE_LYASES"/>
    <property type="match status" value="1"/>
</dbReference>
<feature type="chain" id="PRO_1000116321" description="Argininosuccinate lyase">
    <location>
        <begin position="1"/>
        <end position="457"/>
    </location>
</feature>